<sequence>MKLYAPWQRAFEKIATPFEQFLHAQTTTGLMLMLMTVVALLLANSPLSDEYLHIFHTNIDIFVGNYGFSKSIHHWINDGLMAIFFFIIGLEIKRNILVGELSNIKVAMLPILAAIGGMALPALIYYAINYGDIGEAGWGIPMATDIAFAISALVLLGRRVSASLVTFLVALAIVDDLGAVVVIALFYTQEINMLPLLFAFISFLVLVSFNRFGIHAILPYFVVGFIMWLFMLESGIHATVAGVIAAMAIPSRPKYTPMDFTKSVKSRLDEYDNYPIEDNYMLHEQQKAILQNVKDKIDAISSPSARLEHSLHLPVSLVVIPLFALANAGVSINFSSAYDTLLQPISLGVMAGLVFGKVFGIAGISYLAIKLGIAKLPEGSTMSQVFGVAFLGGIGFTMSIFIAELAFAGNSELVFQAKIGILAASLFAGIFGFIWLRFIAKSAN</sequence>
<name>NHAA_SULDN</name>
<keyword id="KW-0050">Antiport</keyword>
<keyword id="KW-0997">Cell inner membrane</keyword>
<keyword id="KW-1003">Cell membrane</keyword>
<keyword id="KW-0406">Ion transport</keyword>
<keyword id="KW-0472">Membrane</keyword>
<keyword id="KW-1185">Reference proteome</keyword>
<keyword id="KW-0915">Sodium</keyword>
<keyword id="KW-0739">Sodium transport</keyword>
<keyword id="KW-0812">Transmembrane</keyword>
<keyword id="KW-1133">Transmembrane helix</keyword>
<keyword id="KW-0813">Transport</keyword>
<protein>
    <recommendedName>
        <fullName evidence="1">Na(+)/H(+) antiporter NhaA</fullName>
    </recommendedName>
    <alternativeName>
        <fullName evidence="1">Sodium/proton antiporter NhaA</fullName>
    </alternativeName>
</protein>
<proteinExistence type="inferred from homology"/>
<reference key="1">
    <citation type="journal article" date="2008" name="Appl. Environ. Microbiol.">
        <title>Genome of the epsilonproteobacterial chemolithoautotroph Sulfurimonas denitrificans.</title>
        <authorList>
            <person name="Sievert S.M."/>
            <person name="Scott K.M."/>
            <person name="Klotz M.G."/>
            <person name="Chain P.S.G."/>
            <person name="Hauser L.J."/>
            <person name="Hemp J."/>
            <person name="Huegler M."/>
            <person name="Land M."/>
            <person name="Lapidus A."/>
            <person name="Larimer F.W."/>
            <person name="Lucas S."/>
            <person name="Malfatti S.A."/>
            <person name="Meyer F."/>
            <person name="Paulsen I.T."/>
            <person name="Ren Q."/>
            <person name="Simon J."/>
            <person name="Bailey K."/>
            <person name="Diaz E."/>
            <person name="Fitzpatrick K.A."/>
            <person name="Glover B."/>
            <person name="Gwatney N."/>
            <person name="Korajkic A."/>
            <person name="Long A."/>
            <person name="Mobberley J.M."/>
            <person name="Pantry S.N."/>
            <person name="Pazder G."/>
            <person name="Peterson S."/>
            <person name="Quintanilla J.D."/>
            <person name="Sprinkle R."/>
            <person name="Stephens J."/>
            <person name="Thomas P."/>
            <person name="Vaughn R."/>
            <person name="Weber M.J."/>
            <person name="Wooten L.L."/>
        </authorList>
    </citation>
    <scope>NUCLEOTIDE SEQUENCE [LARGE SCALE GENOMIC DNA]</scope>
    <source>
        <strain>ATCC 33889 / DSM 1251</strain>
    </source>
</reference>
<feature type="chain" id="PRO_0000334449" description="Na(+)/H(+) antiporter NhaA">
    <location>
        <begin position="1"/>
        <end position="444"/>
    </location>
</feature>
<feature type="transmembrane region" description="Helical" evidence="1">
    <location>
        <begin position="27"/>
        <end position="47"/>
    </location>
</feature>
<feature type="transmembrane region" description="Helical" evidence="1">
    <location>
        <begin position="72"/>
        <end position="92"/>
    </location>
</feature>
<feature type="transmembrane region" description="Helical" evidence="1">
    <location>
        <begin position="108"/>
        <end position="128"/>
    </location>
</feature>
<feature type="transmembrane region" description="Helical" evidence="1">
    <location>
        <begin position="136"/>
        <end position="156"/>
    </location>
</feature>
<feature type="transmembrane region" description="Helical" evidence="1">
    <location>
        <begin position="167"/>
        <end position="187"/>
    </location>
</feature>
<feature type="transmembrane region" description="Helical" evidence="1">
    <location>
        <begin position="190"/>
        <end position="210"/>
    </location>
</feature>
<feature type="transmembrane region" description="Helical" evidence="1">
    <location>
        <begin position="212"/>
        <end position="232"/>
    </location>
</feature>
<feature type="transmembrane region" description="Helical" evidence="1">
    <location>
        <begin position="312"/>
        <end position="332"/>
    </location>
</feature>
<feature type="transmembrane region" description="Helical" evidence="1">
    <location>
        <begin position="349"/>
        <end position="369"/>
    </location>
</feature>
<feature type="transmembrane region" description="Helical" evidence="1">
    <location>
        <begin position="385"/>
        <end position="405"/>
    </location>
</feature>
<feature type="transmembrane region" description="Helical" evidence="1">
    <location>
        <begin position="419"/>
        <end position="439"/>
    </location>
</feature>
<comment type="function">
    <text evidence="1">Na(+)/H(+) antiporter that extrudes sodium in exchange for external protons.</text>
</comment>
<comment type="catalytic activity">
    <reaction evidence="1">
        <text>Na(+)(in) + 2 H(+)(out) = Na(+)(out) + 2 H(+)(in)</text>
        <dbReference type="Rhea" id="RHEA:29251"/>
        <dbReference type="ChEBI" id="CHEBI:15378"/>
        <dbReference type="ChEBI" id="CHEBI:29101"/>
    </reaction>
    <physiologicalReaction direction="left-to-right" evidence="1">
        <dbReference type="Rhea" id="RHEA:29252"/>
    </physiologicalReaction>
</comment>
<comment type="subcellular location">
    <subcellularLocation>
        <location evidence="1">Cell inner membrane</location>
        <topology evidence="1">Multi-pass membrane protein</topology>
    </subcellularLocation>
</comment>
<comment type="similarity">
    <text evidence="1">Belongs to the NhaA Na(+)/H(+) (TC 2.A.33) antiporter family.</text>
</comment>
<evidence type="ECO:0000255" key="1">
    <source>
        <dbReference type="HAMAP-Rule" id="MF_01844"/>
    </source>
</evidence>
<gene>
    <name evidence="1" type="primary">nhaA</name>
    <name type="ordered locus">Suden_1784</name>
</gene>
<dbReference type="EMBL" id="CP000153">
    <property type="protein sequence ID" value="ABB45058.1"/>
    <property type="molecule type" value="Genomic_DNA"/>
</dbReference>
<dbReference type="RefSeq" id="WP_011373398.1">
    <property type="nucleotide sequence ID" value="NC_007575.1"/>
</dbReference>
<dbReference type="SMR" id="Q30PM3"/>
<dbReference type="STRING" id="326298.Suden_1784"/>
<dbReference type="KEGG" id="tdn:Suden_1784"/>
<dbReference type="eggNOG" id="COG3004">
    <property type="taxonomic scope" value="Bacteria"/>
</dbReference>
<dbReference type="HOGENOM" id="CLU_015803_1_2_7"/>
<dbReference type="OrthoDB" id="9808135at2"/>
<dbReference type="Proteomes" id="UP000002714">
    <property type="component" value="Chromosome"/>
</dbReference>
<dbReference type="GO" id="GO:0005886">
    <property type="term" value="C:plasma membrane"/>
    <property type="evidence" value="ECO:0007669"/>
    <property type="project" value="UniProtKB-SubCell"/>
</dbReference>
<dbReference type="GO" id="GO:0015385">
    <property type="term" value="F:sodium:proton antiporter activity"/>
    <property type="evidence" value="ECO:0007669"/>
    <property type="project" value="TreeGrafter"/>
</dbReference>
<dbReference type="GO" id="GO:0006885">
    <property type="term" value="P:regulation of pH"/>
    <property type="evidence" value="ECO:0007669"/>
    <property type="project" value="InterPro"/>
</dbReference>
<dbReference type="Gene3D" id="1.20.1530.10">
    <property type="entry name" value="Na+/H+ antiporter like domain"/>
    <property type="match status" value="1"/>
</dbReference>
<dbReference type="HAMAP" id="MF_01844">
    <property type="entry name" value="NhaA"/>
    <property type="match status" value="1"/>
</dbReference>
<dbReference type="InterPro" id="IPR023171">
    <property type="entry name" value="Na/H_antiporter_dom_sf"/>
</dbReference>
<dbReference type="InterPro" id="IPR004670">
    <property type="entry name" value="NhaA"/>
</dbReference>
<dbReference type="NCBIfam" id="TIGR00773">
    <property type="entry name" value="NhaA"/>
    <property type="match status" value="1"/>
</dbReference>
<dbReference type="PANTHER" id="PTHR30341:SF0">
    <property type="entry name" value="NA(+)_H(+) ANTIPORTER NHAA"/>
    <property type="match status" value="1"/>
</dbReference>
<dbReference type="PANTHER" id="PTHR30341">
    <property type="entry name" value="SODIUM ION/PROTON ANTIPORTER NHAA-RELATED"/>
    <property type="match status" value="1"/>
</dbReference>
<dbReference type="Pfam" id="PF06965">
    <property type="entry name" value="Na_H_antiport_1"/>
    <property type="match status" value="1"/>
</dbReference>
<accession>Q30PM3</accession>
<organism>
    <name type="scientific">Sulfurimonas denitrificans (strain ATCC 33889 / DSM 1251)</name>
    <name type="common">Thiomicrospira denitrificans (strain ATCC 33889 / DSM 1251)</name>
    <dbReference type="NCBI Taxonomy" id="326298"/>
    <lineage>
        <taxon>Bacteria</taxon>
        <taxon>Pseudomonadati</taxon>
        <taxon>Campylobacterota</taxon>
        <taxon>Epsilonproteobacteria</taxon>
        <taxon>Campylobacterales</taxon>
        <taxon>Sulfurimonadaceae</taxon>
        <taxon>Sulfurimonas</taxon>
    </lineage>
</organism>